<proteinExistence type="inferred from homology"/>
<name>3L21_TROCA</name>
<protein>
    <recommendedName>
        <fullName>Long neurotoxin 1</fullName>
        <shortName>LNTX-1</shortName>
    </recommendedName>
</protein>
<reference key="1">
    <citation type="journal article" date="2007" name="Cell. Mol. Life Sci.">
        <title>Distinct activities of novel neurotoxins from Australian venomous snakes for nicotinic acetylcholine receptors.</title>
        <authorList>
            <person name="St Pierre L."/>
            <person name="Fischer H."/>
            <person name="Adams D.J."/>
            <person name="Schenning M."/>
            <person name="Lavidis N."/>
            <person name="de Jersey J."/>
            <person name="Masci P.P."/>
            <person name="Lavin M.F."/>
        </authorList>
    </citation>
    <scope>NUCLEOTIDE SEQUENCE [MRNA]</scope>
    <source>
        <tissue>Venom gland</tissue>
    </source>
</reference>
<feature type="signal peptide" evidence="1">
    <location>
        <begin position="1"/>
        <end position="21"/>
    </location>
</feature>
<feature type="chain" id="PRO_5000279917" description="Long neurotoxin 1">
    <location>
        <begin position="22"/>
        <end position="93"/>
    </location>
</feature>
<feature type="disulfide bond" evidence="1">
    <location>
        <begin position="24"/>
        <end position="42"/>
    </location>
</feature>
<feature type="disulfide bond" evidence="1">
    <location>
        <begin position="35"/>
        <end position="63"/>
    </location>
</feature>
<feature type="disulfide bond" evidence="1">
    <location>
        <begin position="48"/>
        <end position="52"/>
    </location>
</feature>
<feature type="disulfide bond" evidence="1">
    <location>
        <begin position="67"/>
        <end position="78"/>
    </location>
</feature>
<feature type="disulfide bond" evidence="1">
    <location>
        <begin position="79"/>
        <end position="84"/>
    </location>
</feature>
<keyword id="KW-0008">Acetylcholine receptor inhibiting toxin</keyword>
<keyword id="KW-1015">Disulfide bond</keyword>
<keyword id="KW-0872">Ion channel impairing toxin</keyword>
<keyword id="KW-0528">Neurotoxin</keyword>
<keyword id="KW-0629">Postsynaptic neurotoxin</keyword>
<keyword id="KW-0964">Secreted</keyword>
<keyword id="KW-0732">Signal</keyword>
<keyword id="KW-0800">Toxin</keyword>
<dbReference type="EMBL" id="DQ917509">
    <property type="protein sequence ID" value="ABK63538.1"/>
    <property type="molecule type" value="mRNA"/>
</dbReference>
<dbReference type="SMR" id="A8HDK4"/>
<dbReference type="GO" id="GO:0005576">
    <property type="term" value="C:extracellular region"/>
    <property type="evidence" value="ECO:0007669"/>
    <property type="project" value="UniProtKB-SubCell"/>
</dbReference>
<dbReference type="GO" id="GO:0030550">
    <property type="term" value="F:acetylcholine receptor inhibitor activity"/>
    <property type="evidence" value="ECO:0007669"/>
    <property type="project" value="UniProtKB-KW"/>
</dbReference>
<dbReference type="GO" id="GO:0099106">
    <property type="term" value="F:ion channel regulator activity"/>
    <property type="evidence" value="ECO:0007669"/>
    <property type="project" value="UniProtKB-KW"/>
</dbReference>
<dbReference type="GO" id="GO:0090729">
    <property type="term" value="F:toxin activity"/>
    <property type="evidence" value="ECO:0007669"/>
    <property type="project" value="UniProtKB-KW"/>
</dbReference>
<dbReference type="CDD" id="cd00206">
    <property type="entry name" value="TFP_snake_toxin"/>
    <property type="match status" value="1"/>
</dbReference>
<dbReference type="Gene3D" id="2.10.60.10">
    <property type="entry name" value="CD59"/>
    <property type="match status" value="1"/>
</dbReference>
<dbReference type="InterPro" id="IPR003571">
    <property type="entry name" value="Snake_3FTx"/>
</dbReference>
<dbReference type="InterPro" id="IPR045860">
    <property type="entry name" value="Snake_toxin-like_sf"/>
</dbReference>
<dbReference type="InterPro" id="IPR018354">
    <property type="entry name" value="Snake_toxin_con_site"/>
</dbReference>
<dbReference type="InterPro" id="IPR054131">
    <property type="entry name" value="Toxin_cobra-type"/>
</dbReference>
<dbReference type="Pfam" id="PF21947">
    <property type="entry name" value="Toxin_cobra-type"/>
    <property type="match status" value="1"/>
</dbReference>
<dbReference type="SUPFAM" id="SSF57302">
    <property type="entry name" value="Snake toxin-like"/>
    <property type="match status" value="1"/>
</dbReference>
<dbReference type="PROSITE" id="PS00272">
    <property type="entry name" value="SNAKE_TOXIN"/>
    <property type="match status" value="1"/>
</dbReference>
<organism>
    <name type="scientific">Tropidechis carinatus</name>
    <name type="common">Australian rough-scaled snake</name>
    <dbReference type="NCBI Taxonomy" id="100989"/>
    <lineage>
        <taxon>Eukaryota</taxon>
        <taxon>Metazoa</taxon>
        <taxon>Chordata</taxon>
        <taxon>Craniata</taxon>
        <taxon>Vertebrata</taxon>
        <taxon>Euteleostomi</taxon>
        <taxon>Lepidosauria</taxon>
        <taxon>Squamata</taxon>
        <taxon>Bifurcata</taxon>
        <taxon>Unidentata</taxon>
        <taxon>Episquamata</taxon>
        <taxon>Toxicofera</taxon>
        <taxon>Serpentes</taxon>
        <taxon>Colubroidea</taxon>
        <taxon>Elapidae</taxon>
        <taxon>Notechinae</taxon>
        <taxon>Tropidechis</taxon>
    </lineage>
</organism>
<sequence length="93" mass="10137">MKTLLLTLVVVTIVCLDLGNSFSCYKTPHVKSEPCAPGQNLCYTKTWCDAFCFSRGRVIELGCAATCPPAEPKKDISCCSTDNCNPHPAHQSR</sequence>
<comment type="function">
    <text evidence="2">Binds with high affinity to muscular (alpha-1/CHRNA1) and neuronal (alpha-7/CHRNA7) nicotinic acetylcholine receptor (nAChR) and inhibits acetylcholine from binding to the receptor, thereby impairing neuromuscular and neuronal transmission.</text>
</comment>
<comment type="subcellular location">
    <subcellularLocation>
        <location evidence="1">Secreted</location>
    </subcellularLocation>
</comment>
<comment type="tissue specificity">
    <text evidence="3">Expressed by the venom gland.</text>
</comment>
<comment type="similarity">
    <text evidence="3">Belongs to the three-finger toxin family. Long-chain subfamily. Type II alpha-neurotoxin sub-subfamily.</text>
</comment>
<evidence type="ECO:0000250" key="1"/>
<evidence type="ECO:0000250" key="2">
    <source>
        <dbReference type="UniProtKB" id="P60615"/>
    </source>
</evidence>
<evidence type="ECO:0000305" key="3"/>
<accession>A8HDK4</accession>